<comment type="function">
    <text evidence="2">GTP hydrolase that promotes the GTP-dependent binding of aminoacyl-tRNA to the A-site of ribosomes during protein biosynthesis.</text>
</comment>
<comment type="catalytic activity">
    <reaction evidence="2">
        <text>GTP + H2O = GDP + phosphate + H(+)</text>
        <dbReference type="Rhea" id="RHEA:19669"/>
        <dbReference type="ChEBI" id="CHEBI:15377"/>
        <dbReference type="ChEBI" id="CHEBI:15378"/>
        <dbReference type="ChEBI" id="CHEBI:37565"/>
        <dbReference type="ChEBI" id="CHEBI:43474"/>
        <dbReference type="ChEBI" id="CHEBI:58189"/>
        <dbReference type="EC" id="3.6.5.3"/>
    </reaction>
    <physiologicalReaction direction="left-to-right" evidence="2">
        <dbReference type="Rhea" id="RHEA:19670"/>
    </physiologicalReaction>
</comment>
<comment type="subunit">
    <text evidence="2">Monomer.</text>
</comment>
<comment type="subcellular location">
    <subcellularLocation>
        <location evidence="2">Cytoplasm</location>
    </subcellularLocation>
</comment>
<comment type="similarity">
    <text evidence="2">Belongs to the TRAFAC class translation factor GTPase superfamily. Classic translation factor GTPase family. EF-Tu/EF-1A subfamily.</text>
</comment>
<dbReference type="EC" id="3.6.5.3" evidence="2"/>
<dbReference type="EMBL" id="CP001108">
    <property type="protein sequence ID" value="ACF47076.1"/>
    <property type="molecule type" value="Genomic_DNA"/>
</dbReference>
<dbReference type="RefSeq" id="WP_012506608.1">
    <property type="nucleotide sequence ID" value="NC_011059.1"/>
</dbReference>
<dbReference type="SMR" id="B4S5M9"/>
<dbReference type="STRING" id="290512.Paes_2066"/>
<dbReference type="KEGG" id="paa:Paes_2066"/>
<dbReference type="eggNOG" id="COG0050">
    <property type="taxonomic scope" value="Bacteria"/>
</dbReference>
<dbReference type="HOGENOM" id="CLU_007265_0_0_10"/>
<dbReference type="Proteomes" id="UP000002725">
    <property type="component" value="Chromosome"/>
</dbReference>
<dbReference type="GO" id="GO:0005829">
    <property type="term" value="C:cytosol"/>
    <property type="evidence" value="ECO:0007669"/>
    <property type="project" value="TreeGrafter"/>
</dbReference>
<dbReference type="GO" id="GO:0005525">
    <property type="term" value="F:GTP binding"/>
    <property type="evidence" value="ECO:0007669"/>
    <property type="project" value="UniProtKB-UniRule"/>
</dbReference>
<dbReference type="GO" id="GO:0003924">
    <property type="term" value="F:GTPase activity"/>
    <property type="evidence" value="ECO:0007669"/>
    <property type="project" value="InterPro"/>
</dbReference>
<dbReference type="GO" id="GO:0003746">
    <property type="term" value="F:translation elongation factor activity"/>
    <property type="evidence" value="ECO:0007669"/>
    <property type="project" value="UniProtKB-UniRule"/>
</dbReference>
<dbReference type="CDD" id="cd01884">
    <property type="entry name" value="EF_Tu"/>
    <property type="match status" value="1"/>
</dbReference>
<dbReference type="CDD" id="cd03697">
    <property type="entry name" value="EFTU_II"/>
    <property type="match status" value="1"/>
</dbReference>
<dbReference type="CDD" id="cd03707">
    <property type="entry name" value="EFTU_III"/>
    <property type="match status" value="1"/>
</dbReference>
<dbReference type="FunFam" id="2.40.30.10:FF:000001">
    <property type="entry name" value="Elongation factor Tu"/>
    <property type="match status" value="1"/>
</dbReference>
<dbReference type="FunFam" id="3.40.50.300:FF:000003">
    <property type="entry name" value="Elongation factor Tu"/>
    <property type="match status" value="1"/>
</dbReference>
<dbReference type="Gene3D" id="3.40.50.300">
    <property type="entry name" value="P-loop containing nucleotide triphosphate hydrolases"/>
    <property type="match status" value="1"/>
</dbReference>
<dbReference type="Gene3D" id="2.40.30.10">
    <property type="entry name" value="Translation factors"/>
    <property type="match status" value="2"/>
</dbReference>
<dbReference type="HAMAP" id="MF_00118_B">
    <property type="entry name" value="EF_Tu_B"/>
    <property type="match status" value="1"/>
</dbReference>
<dbReference type="InterPro" id="IPR041709">
    <property type="entry name" value="EF-Tu_GTP-bd"/>
</dbReference>
<dbReference type="InterPro" id="IPR050055">
    <property type="entry name" value="EF-Tu_GTPase"/>
</dbReference>
<dbReference type="InterPro" id="IPR004161">
    <property type="entry name" value="EFTu-like_2"/>
</dbReference>
<dbReference type="InterPro" id="IPR033720">
    <property type="entry name" value="EFTU_2"/>
</dbReference>
<dbReference type="InterPro" id="IPR031157">
    <property type="entry name" value="G_TR_CS"/>
</dbReference>
<dbReference type="InterPro" id="IPR027417">
    <property type="entry name" value="P-loop_NTPase"/>
</dbReference>
<dbReference type="InterPro" id="IPR005225">
    <property type="entry name" value="Small_GTP-bd"/>
</dbReference>
<dbReference type="InterPro" id="IPR000795">
    <property type="entry name" value="T_Tr_GTP-bd_dom"/>
</dbReference>
<dbReference type="InterPro" id="IPR009000">
    <property type="entry name" value="Transl_B-barrel_sf"/>
</dbReference>
<dbReference type="InterPro" id="IPR009001">
    <property type="entry name" value="Transl_elong_EF1A/Init_IF2_C"/>
</dbReference>
<dbReference type="InterPro" id="IPR004541">
    <property type="entry name" value="Transl_elong_EFTu/EF1A_bac/org"/>
</dbReference>
<dbReference type="InterPro" id="IPR004160">
    <property type="entry name" value="Transl_elong_EFTu/EF1A_C"/>
</dbReference>
<dbReference type="NCBIfam" id="TIGR00485">
    <property type="entry name" value="EF-Tu"/>
    <property type="match status" value="1"/>
</dbReference>
<dbReference type="NCBIfam" id="NF000766">
    <property type="entry name" value="PRK00049.1"/>
    <property type="match status" value="1"/>
</dbReference>
<dbReference type="NCBIfam" id="NF009372">
    <property type="entry name" value="PRK12735.1"/>
    <property type="match status" value="1"/>
</dbReference>
<dbReference type="NCBIfam" id="NF009373">
    <property type="entry name" value="PRK12736.1"/>
    <property type="match status" value="1"/>
</dbReference>
<dbReference type="NCBIfam" id="TIGR00231">
    <property type="entry name" value="small_GTP"/>
    <property type="match status" value="1"/>
</dbReference>
<dbReference type="PANTHER" id="PTHR43721:SF22">
    <property type="entry name" value="ELONGATION FACTOR TU, MITOCHONDRIAL"/>
    <property type="match status" value="1"/>
</dbReference>
<dbReference type="PANTHER" id="PTHR43721">
    <property type="entry name" value="ELONGATION FACTOR TU-RELATED"/>
    <property type="match status" value="1"/>
</dbReference>
<dbReference type="Pfam" id="PF00009">
    <property type="entry name" value="GTP_EFTU"/>
    <property type="match status" value="1"/>
</dbReference>
<dbReference type="Pfam" id="PF03144">
    <property type="entry name" value="GTP_EFTU_D2"/>
    <property type="match status" value="1"/>
</dbReference>
<dbReference type="Pfam" id="PF03143">
    <property type="entry name" value="GTP_EFTU_D3"/>
    <property type="match status" value="1"/>
</dbReference>
<dbReference type="PRINTS" id="PR00315">
    <property type="entry name" value="ELONGATNFCT"/>
</dbReference>
<dbReference type="SUPFAM" id="SSF50465">
    <property type="entry name" value="EF-Tu/eEF-1alpha/eIF2-gamma C-terminal domain"/>
    <property type="match status" value="1"/>
</dbReference>
<dbReference type="SUPFAM" id="SSF52540">
    <property type="entry name" value="P-loop containing nucleoside triphosphate hydrolases"/>
    <property type="match status" value="1"/>
</dbReference>
<dbReference type="SUPFAM" id="SSF50447">
    <property type="entry name" value="Translation proteins"/>
    <property type="match status" value="1"/>
</dbReference>
<dbReference type="PROSITE" id="PS00301">
    <property type="entry name" value="G_TR_1"/>
    <property type="match status" value="1"/>
</dbReference>
<dbReference type="PROSITE" id="PS51722">
    <property type="entry name" value="G_TR_2"/>
    <property type="match status" value="1"/>
</dbReference>
<feature type="chain" id="PRO_1000095087" description="Elongation factor Tu">
    <location>
        <begin position="1"/>
        <end position="393"/>
    </location>
</feature>
<feature type="domain" description="tr-type G">
    <location>
        <begin position="10"/>
        <end position="203"/>
    </location>
</feature>
<feature type="region of interest" description="G1" evidence="1">
    <location>
        <begin position="19"/>
        <end position="26"/>
    </location>
</feature>
<feature type="region of interest" description="G2" evidence="1">
    <location>
        <begin position="60"/>
        <end position="64"/>
    </location>
</feature>
<feature type="region of interest" description="G3" evidence="1">
    <location>
        <begin position="81"/>
        <end position="84"/>
    </location>
</feature>
<feature type="region of interest" description="G4" evidence="1">
    <location>
        <begin position="136"/>
        <end position="139"/>
    </location>
</feature>
<feature type="region of interest" description="G5" evidence="1">
    <location>
        <begin position="173"/>
        <end position="175"/>
    </location>
</feature>
<feature type="binding site" evidence="2">
    <location>
        <begin position="19"/>
        <end position="26"/>
    </location>
    <ligand>
        <name>GTP</name>
        <dbReference type="ChEBI" id="CHEBI:37565"/>
    </ligand>
</feature>
<feature type="binding site" evidence="2">
    <location>
        <position position="26"/>
    </location>
    <ligand>
        <name>Mg(2+)</name>
        <dbReference type="ChEBI" id="CHEBI:18420"/>
    </ligand>
</feature>
<feature type="binding site" evidence="2">
    <location>
        <begin position="81"/>
        <end position="85"/>
    </location>
    <ligand>
        <name>GTP</name>
        <dbReference type="ChEBI" id="CHEBI:37565"/>
    </ligand>
</feature>
<feature type="binding site" evidence="2">
    <location>
        <begin position="136"/>
        <end position="139"/>
    </location>
    <ligand>
        <name>GTP</name>
        <dbReference type="ChEBI" id="CHEBI:37565"/>
    </ligand>
</feature>
<organism>
    <name type="scientific">Prosthecochloris aestuarii (strain DSM 271 / SK 413)</name>
    <dbReference type="NCBI Taxonomy" id="290512"/>
    <lineage>
        <taxon>Bacteria</taxon>
        <taxon>Pseudomonadati</taxon>
        <taxon>Chlorobiota</taxon>
        <taxon>Chlorobiia</taxon>
        <taxon>Chlorobiales</taxon>
        <taxon>Chlorobiaceae</taxon>
        <taxon>Prosthecochloris</taxon>
    </lineage>
</organism>
<keyword id="KW-0963">Cytoplasm</keyword>
<keyword id="KW-0251">Elongation factor</keyword>
<keyword id="KW-0342">GTP-binding</keyword>
<keyword id="KW-0378">Hydrolase</keyword>
<keyword id="KW-0460">Magnesium</keyword>
<keyword id="KW-0479">Metal-binding</keyword>
<keyword id="KW-0547">Nucleotide-binding</keyword>
<keyword id="KW-0648">Protein biosynthesis</keyword>
<accession>B4S5M9</accession>
<protein>
    <recommendedName>
        <fullName evidence="2">Elongation factor Tu</fullName>
        <shortName evidence="2">EF-Tu</shortName>
        <ecNumber evidence="2">3.6.5.3</ecNumber>
    </recommendedName>
</protein>
<gene>
    <name evidence="2" type="primary">tuf</name>
    <name type="ordered locus">Paes_2066</name>
</gene>
<sequence>MAKEAYKREKPHVNIGTIGHVDHGKTTLTAAITTVLAKKGMAQLREFGDIDKAPEERERGITISTAHVEYETDKRHYAHIDCPGHADYIKNMITGAAQMDGAILVVAGTDGPMPQTREHILLARQVNVPALVVFLNKVDIADPELIELVELELRELLSEYEFPGDDIPIIKGSALKALDGDPESEAAIMELMDAVDSYIPEPVRDVDKPFLMPIEDVFSISGRGTVGTGRIESGVIKIGEEVEIVGIKPTRKSVVTGIEMFQKTLDQGQAGDNAGILFRGVDKEELERGMVIAKPGTITPHTKFKAEVYILKKEEGGRHTPFFNNYRPQFYFRTTDVTGAVTLPEGVEMVMPGDNLSVEVELIVPIAMDENLRFAIREGGRTVGAGTVTQIIE</sequence>
<proteinExistence type="inferred from homology"/>
<name>EFTU_PROA2</name>
<evidence type="ECO:0000250" key="1"/>
<evidence type="ECO:0000255" key="2">
    <source>
        <dbReference type="HAMAP-Rule" id="MF_00118"/>
    </source>
</evidence>
<reference key="1">
    <citation type="submission" date="2008-06" db="EMBL/GenBank/DDBJ databases">
        <title>Complete sequence of chromosome of Prosthecochloris aestuarii DSM 271.</title>
        <authorList>
            <consortium name="US DOE Joint Genome Institute"/>
            <person name="Lucas S."/>
            <person name="Copeland A."/>
            <person name="Lapidus A."/>
            <person name="Glavina del Rio T."/>
            <person name="Dalin E."/>
            <person name="Tice H."/>
            <person name="Bruce D."/>
            <person name="Goodwin L."/>
            <person name="Pitluck S."/>
            <person name="Schmutz J."/>
            <person name="Larimer F."/>
            <person name="Land M."/>
            <person name="Hauser L."/>
            <person name="Kyrpides N."/>
            <person name="Anderson I."/>
            <person name="Liu Z."/>
            <person name="Li T."/>
            <person name="Zhao F."/>
            <person name="Overmann J."/>
            <person name="Bryant D.A."/>
            <person name="Richardson P."/>
        </authorList>
    </citation>
    <scope>NUCLEOTIDE SEQUENCE [LARGE SCALE GENOMIC DNA]</scope>
    <source>
        <strain>DSM 271 / SK 413</strain>
    </source>
</reference>